<sequence length="292" mass="33271">MRIIKYLTILVISVVILTSCQSSSSQESTKSGEFRIVPTTVALTMTLDKLDLPIVGKPTSYKTLPNRYKDVPEIGQPMEPNVEAVKKLKPTHVLSVSTIKDEMQPFYKQLNMKGYFYDFDSLKGMQKSITQLGDQFNRKAQAKELNDHLNSVKQKIENKAAKQKKHPKVLILMGVPGSYLVATDKSYIGDLVKIAGGENVIKVKDRQYISSNTENLLNINPDIILRLPHGMPEEVKKMFQKEFKQNDIWKHFKAVKNNHVYDLEEVPFGITANVDADKAMTQLYDLFYKDKK</sequence>
<accession>Q2FZE6</accession>
<accession>Q8KQR3</accession>
<reference key="1">
    <citation type="journal article" date="2002" name="Mol. Microbiol.">
        <title>Transferrin binding in Staphylococcus aureus: involvement of a cell wall-anchored protein.</title>
        <authorList>
            <person name="Taylor J.M."/>
            <person name="Heinrichs D.E."/>
        </authorList>
    </citation>
    <scope>NUCLEOTIDE SEQUENCE [GENOMIC DNA]</scope>
    <scope>REGULATION BY FUR</scope>
    <scope>IRON-REGULATED EXPRESSION</scope>
</reference>
<reference key="2">
    <citation type="book" date="2006" name="Gram positive pathogens, 2nd edition">
        <title>The Staphylococcus aureus NCTC 8325 genome.</title>
        <editorList>
            <person name="Fischetti V."/>
            <person name="Novick R."/>
            <person name="Ferretti J."/>
            <person name="Portnoy D."/>
            <person name="Rood J."/>
        </editorList>
        <authorList>
            <person name="Gillaspy A.F."/>
            <person name="Worrell V."/>
            <person name="Orvis J."/>
            <person name="Roe B.A."/>
            <person name="Dyer D.W."/>
            <person name="Iandolo J.J."/>
        </authorList>
    </citation>
    <scope>NUCLEOTIDE SEQUENCE [LARGE SCALE GENOMIC DNA]</scope>
    <source>
        <strain>NCTC 8325 / PS 47</strain>
    </source>
</reference>
<reference key="3">
    <citation type="journal article" date="2004" name="Biochem. Biophys. Res. Commun.">
        <title>In vivo heme scavenging by Staphylococcus aureus IsdC and IsdE proteins.</title>
        <authorList>
            <person name="Mack J."/>
            <person name="Vermeiren C.L."/>
            <person name="Heinrichs D.E."/>
            <person name="Stillman M.J."/>
        </authorList>
    </citation>
    <scope>FUNCTION</scope>
</reference>
<reference key="4">
    <citation type="journal article" date="2007" name="Biochemistry">
        <title>Heme binding properties of Staphylococcus aureus IsdE.</title>
        <authorList>
            <person name="Pluym M."/>
            <person name="Vermeiren C.L."/>
            <person name="Mack J."/>
            <person name="Heinrichs D.E."/>
            <person name="Stillman M.J."/>
        </authorList>
    </citation>
    <scope>MASS SPECTROMETRY</scope>
    <scope>COFACTOR</scope>
    <scope>MUTAGENESIS OF TYR-61; TYR-187; HIS-229 AND TYR-261</scope>
</reference>
<comment type="function">
    <text evidence="4">Involved in heme (porphyrin) scavenging. Binds Fe(2+) and Fe(3+) heme but the largest fraction is Fe(2+) heme. Functions as a high-affinity heme binding protein and probably has a role in relaying heme-iron from cell wall-anchored isd proteins receptors to the probable permease IsdF.</text>
</comment>
<comment type="cofactor">
    <cofactor evidence="5">
        <name>heme b</name>
        <dbReference type="ChEBI" id="CHEBI:60344"/>
    </cofactor>
    <text evidence="5">Binds 1 heme b (iron(II)-protoporphyrin IX) group per subunit.</text>
</comment>
<comment type="subcellular location">
    <subcellularLocation>
        <location evidence="2">Cell membrane</location>
        <topology evidence="2">Lipid-anchor</topology>
    </subcellularLocation>
</comment>
<comment type="induction">
    <text>Repressed by fur in the presence of iron.</text>
</comment>
<comment type="mass spectrometry" mass="31112.0" method="Electrospray" evidence="5">
    <text>The measured mass is that of heme-free IsdE.</text>
</comment>
<comment type="mass spectrometry" mass="31728.0" method="Electrospray" evidence="5">
    <text>The measured mass is that of IsdE with a single heme bound.</text>
</comment>
<comment type="similarity">
    <text evidence="6">Belongs to the bacterial solute-binding protein 8 family.</text>
</comment>
<comment type="sequence caution" evidence="6">
    <conflict type="erroneous initiation">
        <sequence resource="EMBL-CDS" id="ABD30200"/>
    </conflict>
</comment>
<feature type="signal peptide" evidence="2">
    <location>
        <begin position="1"/>
        <end position="19"/>
    </location>
</feature>
<feature type="chain" id="PRO_0000326215" description="High-affinity heme uptake system protein IsdE">
    <location>
        <begin position="20"/>
        <end position="292"/>
    </location>
</feature>
<feature type="domain" description="Fe/B12 periplasmic-binding" evidence="3">
    <location>
        <begin position="35"/>
        <end position="291"/>
    </location>
</feature>
<feature type="binding site" evidence="1">
    <location>
        <position position="41"/>
    </location>
    <ligand>
        <name>heme</name>
        <dbReference type="ChEBI" id="CHEBI:30413"/>
    </ligand>
</feature>
<feature type="binding site" evidence="1">
    <location>
        <position position="42"/>
    </location>
    <ligand>
        <name>heme</name>
        <dbReference type="ChEBI" id="CHEBI:30413"/>
    </ligand>
</feature>
<feature type="binding site" evidence="1">
    <location>
        <position position="60"/>
    </location>
    <ligand>
        <name>heme</name>
        <dbReference type="ChEBI" id="CHEBI:30413"/>
    </ligand>
</feature>
<feature type="binding site" evidence="1">
    <location>
        <position position="61"/>
    </location>
    <ligand>
        <name>heme</name>
        <dbReference type="ChEBI" id="CHEBI:30413"/>
    </ligand>
</feature>
<feature type="binding site" description="axial binding residue" evidence="1">
    <location>
        <position position="78"/>
    </location>
    <ligand>
        <name>heme</name>
        <dbReference type="ChEBI" id="CHEBI:30413"/>
    </ligand>
    <ligandPart>
        <name>Fe</name>
        <dbReference type="ChEBI" id="CHEBI:18248"/>
    </ligandPart>
</feature>
<feature type="binding site" description="axial binding residue">
    <location>
        <position position="229"/>
    </location>
    <ligand>
        <name>heme</name>
        <dbReference type="ChEBI" id="CHEBI:30413"/>
    </ligand>
    <ligandPart>
        <name>Fe</name>
        <dbReference type="ChEBI" id="CHEBI:18248"/>
    </ligandPart>
</feature>
<feature type="lipid moiety-binding region" description="N-palmitoyl cysteine" evidence="2">
    <location>
        <position position="20"/>
    </location>
</feature>
<feature type="lipid moiety-binding region" description="S-diacylglycerol cysteine" evidence="2">
    <location>
        <position position="20"/>
    </location>
</feature>
<feature type="mutagenesis site" description="No effect on heme-binding." evidence="5">
    <original>Y</original>
    <variation>A</variation>
    <location>
        <position position="61"/>
    </location>
</feature>
<feature type="mutagenesis site" description="No effect on heme-binding." evidence="5">
    <original>Y</original>
    <variation>A</variation>
    <location>
        <position position="187"/>
    </location>
</feature>
<feature type="mutagenesis site" description="Only binds to Fe(2+) heme." evidence="5">
    <original>H</original>
    <variation>A</variation>
    <location>
        <position position="229"/>
    </location>
</feature>
<feature type="mutagenesis site" description="No effect on heme-binding." evidence="5">
    <original>Y</original>
    <variation>A</variation>
    <location>
        <position position="261"/>
    </location>
</feature>
<feature type="sequence conflict" description="In Ref. 1; AAL33765." evidence="6" ref="1">
    <original>P</original>
    <variation>S</variation>
    <location>
        <position position="232"/>
    </location>
</feature>
<evidence type="ECO:0000250" key="1"/>
<evidence type="ECO:0000255" key="2">
    <source>
        <dbReference type="PROSITE-ProRule" id="PRU00303"/>
    </source>
</evidence>
<evidence type="ECO:0000255" key="3">
    <source>
        <dbReference type="PROSITE-ProRule" id="PRU00344"/>
    </source>
</evidence>
<evidence type="ECO:0000269" key="4">
    <source>
    </source>
</evidence>
<evidence type="ECO:0000269" key="5">
    <source>
    </source>
</evidence>
<evidence type="ECO:0000305" key="6"/>
<organism>
    <name type="scientific">Staphylococcus aureus (strain NCTC 8325 / PS 47)</name>
    <dbReference type="NCBI Taxonomy" id="93061"/>
    <lineage>
        <taxon>Bacteria</taxon>
        <taxon>Bacillati</taxon>
        <taxon>Bacillota</taxon>
        <taxon>Bacilli</taxon>
        <taxon>Bacillales</taxon>
        <taxon>Staphylococcaceae</taxon>
        <taxon>Staphylococcus</taxon>
    </lineage>
</organism>
<keyword id="KW-1003">Cell membrane</keyword>
<keyword id="KW-0349">Heme</keyword>
<keyword id="KW-0408">Iron</keyword>
<keyword id="KW-0449">Lipoprotein</keyword>
<keyword id="KW-0472">Membrane</keyword>
<keyword id="KW-0479">Metal-binding</keyword>
<keyword id="KW-0564">Palmitate</keyword>
<keyword id="KW-1185">Reference proteome</keyword>
<keyword id="KW-0732">Signal</keyword>
<keyword id="KW-0813">Transport</keyword>
<protein>
    <recommendedName>
        <fullName>High-affinity heme uptake system protein IsdE</fullName>
    </recommendedName>
    <alternativeName>
        <fullName>Iron-regulated surface determinant protein E</fullName>
    </alternativeName>
    <alternativeName>
        <fullName>Staphylococcal iron-regulated protein F</fullName>
    </alternativeName>
</protein>
<proteinExistence type="evidence at protein level"/>
<gene>
    <name type="primary">isdE</name>
    <name type="synonym">sirF</name>
    <name type="ordered locus">SAOUHSC_01085</name>
</gene>
<dbReference type="EMBL" id="AY061874">
    <property type="protein sequence ID" value="AAL33765.1"/>
    <property type="molecule type" value="Genomic_DNA"/>
</dbReference>
<dbReference type="EMBL" id="CP000253">
    <property type="protein sequence ID" value="ABD30200.1"/>
    <property type="status" value="ALT_INIT"/>
    <property type="molecule type" value="Genomic_DNA"/>
</dbReference>
<dbReference type="RefSeq" id="WP_001220199.1">
    <property type="nucleotide sequence ID" value="NZ_LS483365.1"/>
</dbReference>
<dbReference type="RefSeq" id="WP_011443629.1">
    <property type="nucleotide sequence ID" value="NC_007795.1"/>
</dbReference>
<dbReference type="RefSeq" id="YP_499630.1">
    <property type="nucleotide sequence ID" value="NC_007795.1"/>
</dbReference>
<dbReference type="SMR" id="Q2FZE6"/>
<dbReference type="STRING" id="93061.SAOUHSC_01085"/>
<dbReference type="PaxDb" id="1280-SAXN108_1128"/>
<dbReference type="GeneID" id="3919246"/>
<dbReference type="KEGG" id="sao:SAOUHSC_01085"/>
<dbReference type="PATRIC" id="fig|93061.5.peg.994"/>
<dbReference type="eggNOG" id="COG0614">
    <property type="taxonomic scope" value="Bacteria"/>
</dbReference>
<dbReference type="HOGENOM" id="CLU_038034_2_3_9"/>
<dbReference type="OrthoDB" id="66025at2"/>
<dbReference type="Proteomes" id="UP000008816">
    <property type="component" value="Chromosome"/>
</dbReference>
<dbReference type="GO" id="GO:0005886">
    <property type="term" value="C:plasma membrane"/>
    <property type="evidence" value="ECO:0007669"/>
    <property type="project" value="UniProtKB-SubCell"/>
</dbReference>
<dbReference type="GO" id="GO:0020037">
    <property type="term" value="F:heme binding"/>
    <property type="evidence" value="ECO:0007669"/>
    <property type="project" value="InterPro"/>
</dbReference>
<dbReference type="GO" id="GO:0046872">
    <property type="term" value="F:metal ion binding"/>
    <property type="evidence" value="ECO:0007669"/>
    <property type="project" value="UniProtKB-KW"/>
</dbReference>
<dbReference type="GO" id="GO:0071281">
    <property type="term" value="P:cellular response to iron ion"/>
    <property type="evidence" value="ECO:0000318"/>
    <property type="project" value="GO_Central"/>
</dbReference>
<dbReference type="GO" id="GO:0015886">
    <property type="term" value="P:heme transport"/>
    <property type="evidence" value="ECO:0007669"/>
    <property type="project" value="InterPro"/>
</dbReference>
<dbReference type="FunFam" id="3.40.50.1980:FF:000022">
    <property type="entry name" value="Heme ABC transporter substrate-binding protein IsdE"/>
    <property type="match status" value="1"/>
</dbReference>
<dbReference type="FunFam" id="3.40.50.1980:FF:000031">
    <property type="entry name" value="High-affinity heme uptake system protein IsdE"/>
    <property type="match status" value="1"/>
</dbReference>
<dbReference type="Gene3D" id="3.40.50.1980">
    <property type="entry name" value="Nitrogenase molybdenum iron protein domain"/>
    <property type="match status" value="2"/>
</dbReference>
<dbReference type="InterPro" id="IPR050902">
    <property type="entry name" value="ABC_Transporter_SBP"/>
</dbReference>
<dbReference type="InterPro" id="IPR019957">
    <property type="entry name" value="ABC_transptr_haem-bd_IsdE"/>
</dbReference>
<dbReference type="InterPro" id="IPR002491">
    <property type="entry name" value="ABC_transptr_periplasmic_BD"/>
</dbReference>
<dbReference type="NCBIfam" id="TIGR03659">
    <property type="entry name" value="IsdE"/>
    <property type="match status" value="1"/>
</dbReference>
<dbReference type="PANTHER" id="PTHR30535:SF36">
    <property type="entry name" value="HIGH-AFFINITY HEME UPTAKE SYSTEM PROTEIN ISDE"/>
    <property type="match status" value="1"/>
</dbReference>
<dbReference type="PANTHER" id="PTHR30535">
    <property type="entry name" value="VITAMIN B12-BINDING PROTEIN"/>
    <property type="match status" value="1"/>
</dbReference>
<dbReference type="Pfam" id="PF01497">
    <property type="entry name" value="Peripla_BP_2"/>
    <property type="match status" value="1"/>
</dbReference>
<dbReference type="SUPFAM" id="SSF53807">
    <property type="entry name" value="Helical backbone' metal receptor"/>
    <property type="match status" value="1"/>
</dbReference>
<dbReference type="PROSITE" id="PS50983">
    <property type="entry name" value="FE_B12_PBP"/>
    <property type="match status" value="1"/>
</dbReference>
<dbReference type="PROSITE" id="PS51257">
    <property type="entry name" value="PROKAR_LIPOPROTEIN"/>
    <property type="match status" value="1"/>
</dbReference>
<name>ISDE_STAA8</name>